<proteinExistence type="inferred from homology"/>
<evidence type="ECO:0000255" key="1">
    <source>
        <dbReference type="HAMAP-Rule" id="MF_00040"/>
    </source>
</evidence>
<sequence length="186" mass="20849">MSVAEIRKSAETRMAKSLDTLKVNLSKIRTGRAHTGILDHVQVEYYGSPVPVSQVANVNLVDARTISVQPYEKPMAAAIEKAIRESDLGLNPMSLGDSIRVPMPALTEERRRDLTKVVKGEGEDAKIAVRNLRREANESLKKLVKDKEISEDDERRAQDDIQKLTDRNVTEIDKLITQKEAEIMTV</sequence>
<comment type="function">
    <text evidence="1">Responsible for the release of ribosomes from messenger RNA at the termination of protein biosynthesis. May increase the efficiency of translation by recycling ribosomes from one round of translation to another.</text>
</comment>
<comment type="subcellular location">
    <subcellularLocation>
        <location evidence="1">Cytoplasm</location>
    </subcellularLocation>
</comment>
<comment type="similarity">
    <text evidence="1">Belongs to the RRF family.</text>
</comment>
<accession>A9INV3</accession>
<dbReference type="EMBL" id="AM902716">
    <property type="protein sequence ID" value="CAP42874.1"/>
    <property type="molecule type" value="Genomic_DNA"/>
</dbReference>
<dbReference type="SMR" id="A9INV3"/>
<dbReference type="STRING" id="94624.Bpet2532"/>
<dbReference type="KEGG" id="bpt:Bpet2532"/>
<dbReference type="eggNOG" id="COG0233">
    <property type="taxonomic scope" value="Bacteria"/>
</dbReference>
<dbReference type="Proteomes" id="UP000001225">
    <property type="component" value="Chromosome"/>
</dbReference>
<dbReference type="GO" id="GO:0005829">
    <property type="term" value="C:cytosol"/>
    <property type="evidence" value="ECO:0007669"/>
    <property type="project" value="GOC"/>
</dbReference>
<dbReference type="GO" id="GO:0043023">
    <property type="term" value="F:ribosomal large subunit binding"/>
    <property type="evidence" value="ECO:0007669"/>
    <property type="project" value="TreeGrafter"/>
</dbReference>
<dbReference type="GO" id="GO:0002184">
    <property type="term" value="P:cytoplasmic translational termination"/>
    <property type="evidence" value="ECO:0007669"/>
    <property type="project" value="TreeGrafter"/>
</dbReference>
<dbReference type="CDD" id="cd00520">
    <property type="entry name" value="RRF"/>
    <property type="match status" value="1"/>
</dbReference>
<dbReference type="FunFam" id="1.10.132.20:FF:000001">
    <property type="entry name" value="Ribosome-recycling factor"/>
    <property type="match status" value="1"/>
</dbReference>
<dbReference type="FunFam" id="3.30.1360.40:FF:000001">
    <property type="entry name" value="Ribosome-recycling factor"/>
    <property type="match status" value="1"/>
</dbReference>
<dbReference type="Gene3D" id="3.30.1360.40">
    <property type="match status" value="1"/>
</dbReference>
<dbReference type="Gene3D" id="1.10.132.20">
    <property type="entry name" value="Ribosome-recycling factor"/>
    <property type="match status" value="1"/>
</dbReference>
<dbReference type="HAMAP" id="MF_00040">
    <property type="entry name" value="RRF"/>
    <property type="match status" value="1"/>
</dbReference>
<dbReference type="InterPro" id="IPR002661">
    <property type="entry name" value="Ribosome_recyc_fac"/>
</dbReference>
<dbReference type="InterPro" id="IPR023584">
    <property type="entry name" value="Ribosome_recyc_fac_dom"/>
</dbReference>
<dbReference type="InterPro" id="IPR036191">
    <property type="entry name" value="RRF_sf"/>
</dbReference>
<dbReference type="NCBIfam" id="TIGR00496">
    <property type="entry name" value="frr"/>
    <property type="match status" value="1"/>
</dbReference>
<dbReference type="PANTHER" id="PTHR20982:SF3">
    <property type="entry name" value="MITOCHONDRIAL RIBOSOME RECYCLING FACTOR PSEUDO 1"/>
    <property type="match status" value="1"/>
</dbReference>
<dbReference type="PANTHER" id="PTHR20982">
    <property type="entry name" value="RIBOSOME RECYCLING FACTOR"/>
    <property type="match status" value="1"/>
</dbReference>
<dbReference type="Pfam" id="PF01765">
    <property type="entry name" value="RRF"/>
    <property type="match status" value="1"/>
</dbReference>
<dbReference type="SUPFAM" id="SSF55194">
    <property type="entry name" value="Ribosome recycling factor, RRF"/>
    <property type="match status" value="1"/>
</dbReference>
<reference key="1">
    <citation type="journal article" date="2008" name="BMC Genomics">
        <title>The missing link: Bordetella petrii is endowed with both the metabolic versatility of environmental bacteria and virulence traits of pathogenic Bordetellae.</title>
        <authorList>
            <person name="Gross R."/>
            <person name="Guzman C.A."/>
            <person name="Sebaihia M."/>
            <person name="Martin dos Santos V.A.P."/>
            <person name="Pieper D.H."/>
            <person name="Koebnik R."/>
            <person name="Lechner M."/>
            <person name="Bartels D."/>
            <person name="Buhrmester J."/>
            <person name="Choudhuri J.V."/>
            <person name="Ebensen T."/>
            <person name="Gaigalat L."/>
            <person name="Herrmann S."/>
            <person name="Khachane A.N."/>
            <person name="Larisch C."/>
            <person name="Link S."/>
            <person name="Linke B."/>
            <person name="Meyer F."/>
            <person name="Mormann S."/>
            <person name="Nakunst D."/>
            <person name="Rueckert C."/>
            <person name="Schneiker-Bekel S."/>
            <person name="Schulze K."/>
            <person name="Voerholter F.-J."/>
            <person name="Yevsa T."/>
            <person name="Engle J.T."/>
            <person name="Goldman W.E."/>
            <person name="Puehler A."/>
            <person name="Goebel U.B."/>
            <person name="Goesmann A."/>
            <person name="Bloecker H."/>
            <person name="Kaiser O."/>
            <person name="Martinez-Arias R."/>
        </authorList>
    </citation>
    <scope>NUCLEOTIDE SEQUENCE [LARGE SCALE GENOMIC DNA]</scope>
    <source>
        <strain>ATCC BAA-461 / DSM 12804 / CCUG 43448</strain>
    </source>
</reference>
<name>RRF_BORPD</name>
<keyword id="KW-0963">Cytoplasm</keyword>
<keyword id="KW-0648">Protein biosynthesis</keyword>
<organism>
    <name type="scientific">Bordetella petrii (strain ATCC BAA-461 / DSM 12804 / CCUG 43448)</name>
    <dbReference type="NCBI Taxonomy" id="340100"/>
    <lineage>
        <taxon>Bacteria</taxon>
        <taxon>Pseudomonadati</taxon>
        <taxon>Pseudomonadota</taxon>
        <taxon>Betaproteobacteria</taxon>
        <taxon>Burkholderiales</taxon>
        <taxon>Alcaligenaceae</taxon>
        <taxon>Bordetella</taxon>
    </lineage>
</organism>
<gene>
    <name evidence="1" type="primary">frr</name>
    <name type="ordered locus">Bpet2532</name>
</gene>
<feature type="chain" id="PRO_1000090712" description="Ribosome-recycling factor">
    <location>
        <begin position="1"/>
        <end position="186"/>
    </location>
</feature>
<protein>
    <recommendedName>
        <fullName evidence="1">Ribosome-recycling factor</fullName>
        <shortName evidence="1">RRF</shortName>
    </recommendedName>
    <alternativeName>
        <fullName evidence="1">Ribosome-releasing factor</fullName>
    </alternativeName>
</protein>